<name>RS20_CAMFF</name>
<organism>
    <name type="scientific">Campylobacter fetus subsp. fetus (strain 82-40)</name>
    <dbReference type="NCBI Taxonomy" id="360106"/>
    <lineage>
        <taxon>Bacteria</taxon>
        <taxon>Pseudomonadati</taxon>
        <taxon>Campylobacterota</taxon>
        <taxon>Epsilonproteobacteria</taxon>
        <taxon>Campylobacterales</taxon>
        <taxon>Campylobacteraceae</taxon>
        <taxon>Campylobacter</taxon>
    </lineage>
</organism>
<sequence length="88" mass="9873">MANHKSAEKRARQTIKRTERNRFYRTRLKNLTKAVRVAVASGDKDAALVALKDANKNFHSFVSKGFLKKETASRKVSRLAKLVSTLAA</sequence>
<dbReference type="EMBL" id="CP000487">
    <property type="protein sequence ID" value="ABK82453.1"/>
    <property type="molecule type" value="Genomic_DNA"/>
</dbReference>
<dbReference type="RefSeq" id="WP_002850811.1">
    <property type="nucleotide sequence ID" value="NC_008599.1"/>
</dbReference>
<dbReference type="SMR" id="A0RRK3"/>
<dbReference type="GeneID" id="61065530"/>
<dbReference type="KEGG" id="cff:CFF8240_1718"/>
<dbReference type="eggNOG" id="COG0268">
    <property type="taxonomic scope" value="Bacteria"/>
</dbReference>
<dbReference type="HOGENOM" id="CLU_160655_3_0_7"/>
<dbReference type="Proteomes" id="UP000000760">
    <property type="component" value="Chromosome"/>
</dbReference>
<dbReference type="GO" id="GO:0005829">
    <property type="term" value="C:cytosol"/>
    <property type="evidence" value="ECO:0007669"/>
    <property type="project" value="TreeGrafter"/>
</dbReference>
<dbReference type="GO" id="GO:0015935">
    <property type="term" value="C:small ribosomal subunit"/>
    <property type="evidence" value="ECO:0007669"/>
    <property type="project" value="TreeGrafter"/>
</dbReference>
<dbReference type="GO" id="GO:0070181">
    <property type="term" value="F:small ribosomal subunit rRNA binding"/>
    <property type="evidence" value="ECO:0007669"/>
    <property type="project" value="TreeGrafter"/>
</dbReference>
<dbReference type="GO" id="GO:0003735">
    <property type="term" value="F:structural constituent of ribosome"/>
    <property type="evidence" value="ECO:0007669"/>
    <property type="project" value="InterPro"/>
</dbReference>
<dbReference type="GO" id="GO:0006412">
    <property type="term" value="P:translation"/>
    <property type="evidence" value="ECO:0007669"/>
    <property type="project" value="UniProtKB-UniRule"/>
</dbReference>
<dbReference type="FunFam" id="1.20.58.110:FF:000001">
    <property type="entry name" value="30S ribosomal protein S20"/>
    <property type="match status" value="1"/>
</dbReference>
<dbReference type="Gene3D" id="1.20.58.110">
    <property type="entry name" value="Ribosomal protein S20"/>
    <property type="match status" value="1"/>
</dbReference>
<dbReference type="HAMAP" id="MF_00500">
    <property type="entry name" value="Ribosomal_bS20"/>
    <property type="match status" value="1"/>
</dbReference>
<dbReference type="InterPro" id="IPR002583">
    <property type="entry name" value="Ribosomal_bS20"/>
</dbReference>
<dbReference type="InterPro" id="IPR036510">
    <property type="entry name" value="Ribosomal_bS20_sf"/>
</dbReference>
<dbReference type="NCBIfam" id="TIGR00029">
    <property type="entry name" value="S20"/>
    <property type="match status" value="1"/>
</dbReference>
<dbReference type="PANTHER" id="PTHR33398">
    <property type="entry name" value="30S RIBOSOMAL PROTEIN S20"/>
    <property type="match status" value="1"/>
</dbReference>
<dbReference type="PANTHER" id="PTHR33398:SF1">
    <property type="entry name" value="SMALL RIBOSOMAL SUBUNIT PROTEIN BS20C"/>
    <property type="match status" value="1"/>
</dbReference>
<dbReference type="Pfam" id="PF01649">
    <property type="entry name" value="Ribosomal_S20p"/>
    <property type="match status" value="1"/>
</dbReference>
<dbReference type="SUPFAM" id="SSF46992">
    <property type="entry name" value="Ribosomal protein S20"/>
    <property type="match status" value="1"/>
</dbReference>
<comment type="function">
    <text evidence="1">Binds directly to 16S ribosomal RNA.</text>
</comment>
<comment type="similarity">
    <text evidence="1">Belongs to the bacterial ribosomal protein bS20 family.</text>
</comment>
<protein>
    <recommendedName>
        <fullName evidence="1">Small ribosomal subunit protein bS20</fullName>
    </recommendedName>
    <alternativeName>
        <fullName evidence="3">30S ribosomal protein S20</fullName>
    </alternativeName>
</protein>
<accession>A0RRK3</accession>
<reference key="1">
    <citation type="submission" date="2006-11" db="EMBL/GenBank/DDBJ databases">
        <title>Sequence of Campylobacter fetus subsp. fetus 82-40.</title>
        <authorList>
            <person name="Fouts D.E."/>
            <person name="Nelson K.E."/>
        </authorList>
    </citation>
    <scope>NUCLEOTIDE SEQUENCE [LARGE SCALE GENOMIC DNA]</scope>
    <source>
        <strain>82-40</strain>
    </source>
</reference>
<proteinExistence type="inferred from homology"/>
<keyword id="KW-0687">Ribonucleoprotein</keyword>
<keyword id="KW-0689">Ribosomal protein</keyword>
<keyword id="KW-0694">RNA-binding</keyword>
<keyword id="KW-0699">rRNA-binding</keyword>
<feature type="chain" id="PRO_1000014566" description="Small ribosomal subunit protein bS20">
    <location>
        <begin position="1"/>
        <end position="88"/>
    </location>
</feature>
<feature type="region of interest" description="Disordered" evidence="2">
    <location>
        <begin position="1"/>
        <end position="20"/>
    </location>
</feature>
<gene>
    <name evidence="1" type="primary">rpsT</name>
    <name type="ordered locus">CFF8240_1718</name>
</gene>
<evidence type="ECO:0000255" key="1">
    <source>
        <dbReference type="HAMAP-Rule" id="MF_00500"/>
    </source>
</evidence>
<evidence type="ECO:0000256" key="2">
    <source>
        <dbReference type="SAM" id="MobiDB-lite"/>
    </source>
</evidence>
<evidence type="ECO:0000305" key="3"/>